<sequence>MQVIETLAQGLKRELKVVIPADEMEARMNERLVEVKDRVRINGFRPGKVPVAHLKKVYGKSIMADLVNEIVREKPTEILTSRGEKSATQPEIGMTEDEAEADKILKAEADFEFTVAYEIIPPIELKDASGIKVTREVVDVGEDEVNEQIERIAESARTYESKKGKAANGDRVTIDYLGKVDGEAFDGGKDEDAELVLGSNRFIPGFEEQLVGAKAGDEKTITVTFPADYPAANLAGKEATFDVTVKDVAAAAPIEINDELATKLGLESVDKLKEIVRGQIESQFGSITRQKVKRQLLDQLDELYQFDTPERLVDAEFENIWRQINTDLQQAGKTFADEDTTEEEARAEYRKLAQRRVRLGLVLSEIGEKAGVQVSDDEMQNSLFQQLRQFPGQEKEIIEYFRNTPGAAASLRAPLFEEKVVDHLLTEVSVTDKKVSKEELTAEDDADEKPAKKTASKKKAAAKADAAEGEEAAAPKRKAPAKKKASDESAE</sequence>
<proteinExistence type="inferred from homology"/>
<reference key="1">
    <citation type="submission" date="2007-06" db="EMBL/GenBank/DDBJ databases">
        <title>Complete sequence of Sinorhizobium medicae WSM419 chromosome.</title>
        <authorList>
            <consortium name="US DOE Joint Genome Institute"/>
            <person name="Copeland A."/>
            <person name="Lucas S."/>
            <person name="Lapidus A."/>
            <person name="Barry K."/>
            <person name="Glavina del Rio T."/>
            <person name="Dalin E."/>
            <person name="Tice H."/>
            <person name="Pitluck S."/>
            <person name="Chain P."/>
            <person name="Malfatti S."/>
            <person name="Shin M."/>
            <person name="Vergez L."/>
            <person name="Schmutz J."/>
            <person name="Larimer F."/>
            <person name="Land M."/>
            <person name="Hauser L."/>
            <person name="Kyrpides N."/>
            <person name="Mikhailova N."/>
            <person name="Reeve W.G."/>
            <person name="Richardson P."/>
        </authorList>
    </citation>
    <scope>NUCLEOTIDE SEQUENCE [LARGE SCALE GENOMIC DNA]</scope>
    <source>
        <strain>WSM419</strain>
    </source>
</reference>
<dbReference type="EC" id="5.2.1.8" evidence="1"/>
<dbReference type="EMBL" id="CP000738">
    <property type="protein sequence ID" value="ABR60032.1"/>
    <property type="molecule type" value="Genomic_DNA"/>
</dbReference>
<dbReference type="RefSeq" id="WP_011975350.1">
    <property type="nucleotide sequence ID" value="NC_009636.1"/>
</dbReference>
<dbReference type="RefSeq" id="YP_001326867.1">
    <property type="nucleotide sequence ID" value="NC_009636.1"/>
</dbReference>
<dbReference type="SMR" id="A6U8Q2"/>
<dbReference type="STRING" id="366394.Smed_1181"/>
<dbReference type="GeneID" id="61612038"/>
<dbReference type="KEGG" id="smd:Smed_1181"/>
<dbReference type="PATRIC" id="fig|366394.8.peg.4309"/>
<dbReference type="eggNOG" id="COG0544">
    <property type="taxonomic scope" value="Bacteria"/>
</dbReference>
<dbReference type="HOGENOM" id="CLU_033058_2_2_5"/>
<dbReference type="OrthoDB" id="9767721at2"/>
<dbReference type="Proteomes" id="UP000001108">
    <property type="component" value="Chromosome"/>
</dbReference>
<dbReference type="GO" id="GO:0005737">
    <property type="term" value="C:cytoplasm"/>
    <property type="evidence" value="ECO:0007669"/>
    <property type="project" value="UniProtKB-SubCell"/>
</dbReference>
<dbReference type="GO" id="GO:0003755">
    <property type="term" value="F:peptidyl-prolyl cis-trans isomerase activity"/>
    <property type="evidence" value="ECO:0007669"/>
    <property type="project" value="UniProtKB-UniRule"/>
</dbReference>
<dbReference type="GO" id="GO:0044183">
    <property type="term" value="F:protein folding chaperone"/>
    <property type="evidence" value="ECO:0007669"/>
    <property type="project" value="TreeGrafter"/>
</dbReference>
<dbReference type="GO" id="GO:0043022">
    <property type="term" value="F:ribosome binding"/>
    <property type="evidence" value="ECO:0007669"/>
    <property type="project" value="TreeGrafter"/>
</dbReference>
<dbReference type="GO" id="GO:0051083">
    <property type="term" value="P:'de novo' cotranslational protein folding"/>
    <property type="evidence" value="ECO:0007669"/>
    <property type="project" value="TreeGrafter"/>
</dbReference>
<dbReference type="GO" id="GO:0051301">
    <property type="term" value="P:cell division"/>
    <property type="evidence" value="ECO:0007669"/>
    <property type="project" value="UniProtKB-KW"/>
</dbReference>
<dbReference type="GO" id="GO:0061077">
    <property type="term" value="P:chaperone-mediated protein folding"/>
    <property type="evidence" value="ECO:0007669"/>
    <property type="project" value="TreeGrafter"/>
</dbReference>
<dbReference type="GO" id="GO:0015031">
    <property type="term" value="P:protein transport"/>
    <property type="evidence" value="ECO:0007669"/>
    <property type="project" value="UniProtKB-UniRule"/>
</dbReference>
<dbReference type="GO" id="GO:0043335">
    <property type="term" value="P:protein unfolding"/>
    <property type="evidence" value="ECO:0007669"/>
    <property type="project" value="TreeGrafter"/>
</dbReference>
<dbReference type="FunFam" id="3.10.50.40:FF:000001">
    <property type="entry name" value="Trigger factor"/>
    <property type="match status" value="1"/>
</dbReference>
<dbReference type="Gene3D" id="3.10.50.40">
    <property type="match status" value="1"/>
</dbReference>
<dbReference type="Gene3D" id="3.30.70.1050">
    <property type="entry name" value="Trigger factor ribosome-binding domain"/>
    <property type="match status" value="1"/>
</dbReference>
<dbReference type="Gene3D" id="1.10.3120.10">
    <property type="entry name" value="Trigger factor, C-terminal domain"/>
    <property type="match status" value="1"/>
</dbReference>
<dbReference type="HAMAP" id="MF_00303">
    <property type="entry name" value="Trigger_factor_Tig"/>
    <property type="match status" value="1"/>
</dbReference>
<dbReference type="InterPro" id="IPR046357">
    <property type="entry name" value="PPIase_dom_sf"/>
</dbReference>
<dbReference type="InterPro" id="IPR001179">
    <property type="entry name" value="PPIase_FKBP_dom"/>
</dbReference>
<dbReference type="InterPro" id="IPR005215">
    <property type="entry name" value="Trig_fac"/>
</dbReference>
<dbReference type="InterPro" id="IPR008880">
    <property type="entry name" value="Trigger_fac_C"/>
</dbReference>
<dbReference type="InterPro" id="IPR037041">
    <property type="entry name" value="Trigger_fac_C_sf"/>
</dbReference>
<dbReference type="InterPro" id="IPR008881">
    <property type="entry name" value="Trigger_fac_ribosome-bd_bac"/>
</dbReference>
<dbReference type="InterPro" id="IPR036611">
    <property type="entry name" value="Trigger_fac_ribosome-bd_sf"/>
</dbReference>
<dbReference type="InterPro" id="IPR027304">
    <property type="entry name" value="Trigger_fact/SurA_dom_sf"/>
</dbReference>
<dbReference type="NCBIfam" id="TIGR00115">
    <property type="entry name" value="tig"/>
    <property type="match status" value="1"/>
</dbReference>
<dbReference type="PANTHER" id="PTHR30560">
    <property type="entry name" value="TRIGGER FACTOR CHAPERONE AND PEPTIDYL-PROLYL CIS/TRANS ISOMERASE"/>
    <property type="match status" value="1"/>
</dbReference>
<dbReference type="PANTHER" id="PTHR30560:SF3">
    <property type="entry name" value="TRIGGER FACTOR-LIKE PROTEIN TIG, CHLOROPLASTIC"/>
    <property type="match status" value="1"/>
</dbReference>
<dbReference type="Pfam" id="PF00254">
    <property type="entry name" value="FKBP_C"/>
    <property type="match status" value="1"/>
</dbReference>
<dbReference type="Pfam" id="PF05698">
    <property type="entry name" value="Trigger_C"/>
    <property type="match status" value="1"/>
</dbReference>
<dbReference type="Pfam" id="PF05697">
    <property type="entry name" value="Trigger_N"/>
    <property type="match status" value="1"/>
</dbReference>
<dbReference type="PIRSF" id="PIRSF003095">
    <property type="entry name" value="Trigger_factor"/>
    <property type="match status" value="1"/>
</dbReference>
<dbReference type="SUPFAM" id="SSF54534">
    <property type="entry name" value="FKBP-like"/>
    <property type="match status" value="1"/>
</dbReference>
<dbReference type="SUPFAM" id="SSF109998">
    <property type="entry name" value="Triger factor/SurA peptide-binding domain-like"/>
    <property type="match status" value="1"/>
</dbReference>
<dbReference type="SUPFAM" id="SSF102735">
    <property type="entry name" value="Trigger factor ribosome-binding domain"/>
    <property type="match status" value="1"/>
</dbReference>
<dbReference type="PROSITE" id="PS50059">
    <property type="entry name" value="FKBP_PPIASE"/>
    <property type="match status" value="1"/>
</dbReference>
<feature type="chain" id="PRO_1000022763" description="Trigger factor">
    <location>
        <begin position="1"/>
        <end position="491"/>
    </location>
</feature>
<feature type="domain" description="PPIase FKBP-type" evidence="1">
    <location>
        <begin position="169"/>
        <end position="254"/>
    </location>
</feature>
<feature type="region of interest" description="Disordered" evidence="2">
    <location>
        <begin position="434"/>
        <end position="491"/>
    </location>
</feature>
<feature type="compositionally biased region" description="Basic residues" evidence="2">
    <location>
        <begin position="452"/>
        <end position="461"/>
    </location>
</feature>
<comment type="function">
    <text evidence="1">Involved in protein export. Acts as a chaperone by maintaining the newly synthesized protein in an open conformation. Functions as a peptidyl-prolyl cis-trans isomerase.</text>
</comment>
<comment type="catalytic activity">
    <reaction evidence="1">
        <text>[protein]-peptidylproline (omega=180) = [protein]-peptidylproline (omega=0)</text>
        <dbReference type="Rhea" id="RHEA:16237"/>
        <dbReference type="Rhea" id="RHEA-COMP:10747"/>
        <dbReference type="Rhea" id="RHEA-COMP:10748"/>
        <dbReference type="ChEBI" id="CHEBI:83833"/>
        <dbReference type="ChEBI" id="CHEBI:83834"/>
        <dbReference type="EC" id="5.2.1.8"/>
    </reaction>
</comment>
<comment type="subcellular location">
    <subcellularLocation>
        <location>Cytoplasm</location>
    </subcellularLocation>
    <text evidence="1">About half TF is bound to the ribosome near the polypeptide exit tunnel while the other half is free in the cytoplasm.</text>
</comment>
<comment type="domain">
    <text evidence="1">Consists of 3 domains; the N-terminus binds the ribosome, the middle domain has PPIase activity, while the C-terminus has intrinsic chaperone activity on its own.</text>
</comment>
<comment type="similarity">
    <text evidence="1">Belongs to the FKBP-type PPIase family. Tig subfamily.</text>
</comment>
<accession>A6U8Q2</accession>
<organism>
    <name type="scientific">Sinorhizobium medicae (strain WSM419)</name>
    <name type="common">Ensifer medicae</name>
    <dbReference type="NCBI Taxonomy" id="366394"/>
    <lineage>
        <taxon>Bacteria</taxon>
        <taxon>Pseudomonadati</taxon>
        <taxon>Pseudomonadota</taxon>
        <taxon>Alphaproteobacteria</taxon>
        <taxon>Hyphomicrobiales</taxon>
        <taxon>Rhizobiaceae</taxon>
        <taxon>Sinorhizobium/Ensifer group</taxon>
        <taxon>Sinorhizobium</taxon>
    </lineage>
</organism>
<protein>
    <recommendedName>
        <fullName evidence="1">Trigger factor</fullName>
        <shortName evidence="1">TF</shortName>
        <ecNumber evidence="1">5.2.1.8</ecNumber>
    </recommendedName>
    <alternativeName>
        <fullName evidence="1">PPIase</fullName>
    </alternativeName>
</protein>
<keyword id="KW-0131">Cell cycle</keyword>
<keyword id="KW-0132">Cell division</keyword>
<keyword id="KW-0143">Chaperone</keyword>
<keyword id="KW-0963">Cytoplasm</keyword>
<keyword id="KW-0413">Isomerase</keyword>
<keyword id="KW-0697">Rotamase</keyword>
<evidence type="ECO:0000255" key="1">
    <source>
        <dbReference type="HAMAP-Rule" id="MF_00303"/>
    </source>
</evidence>
<evidence type="ECO:0000256" key="2">
    <source>
        <dbReference type="SAM" id="MobiDB-lite"/>
    </source>
</evidence>
<gene>
    <name evidence="1" type="primary">tig</name>
    <name type="ordered locus">Smed_1181</name>
</gene>
<name>TIG_SINMW</name>